<keyword id="KW-0251">Elongation factor</keyword>
<keyword id="KW-0648">Protein biosynthesis</keyword>
<sequence>MADYNLVGVIKVMPTDPDVNLDELEEKLKAVIPEKFGLAKVEREPIAFGLVALKFYVLGRDEEGYSYDEVADLFRQVENVESAEVETVSRI</sequence>
<dbReference type="EMBL" id="CP000855">
    <property type="protein sequence ID" value="ACJ17357.1"/>
    <property type="molecule type" value="Genomic_DNA"/>
</dbReference>
<dbReference type="RefSeq" id="WP_012572829.1">
    <property type="nucleotide sequence ID" value="NC_011529.1"/>
</dbReference>
<dbReference type="SMR" id="B6YVN3"/>
<dbReference type="STRING" id="523850.TON_1866"/>
<dbReference type="GeneID" id="7017538"/>
<dbReference type="KEGG" id="ton:TON_1866"/>
<dbReference type="PATRIC" id="fig|523850.10.peg.1880"/>
<dbReference type="eggNOG" id="arCOG01988">
    <property type="taxonomic scope" value="Archaea"/>
</dbReference>
<dbReference type="HOGENOM" id="CLU_165896_1_0_2"/>
<dbReference type="OrthoDB" id="84643at2157"/>
<dbReference type="Proteomes" id="UP000002727">
    <property type="component" value="Chromosome"/>
</dbReference>
<dbReference type="GO" id="GO:0003746">
    <property type="term" value="F:translation elongation factor activity"/>
    <property type="evidence" value="ECO:0007669"/>
    <property type="project" value="UniProtKB-UniRule"/>
</dbReference>
<dbReference type="CDD" id="cd00292">
    <property type="entry name" value="EF1B"/>
    <property type="match status" value="1"/>
</dbReference>
<dbReference type="Gene3D" id="3.30.70.60">
    <property type="match status" value="1"/>
</dbReference>
<dbReference type="HAMAP" id="MF_00043">
    <property type="entry name" value="EF1_beta"/>
    <property type="match status" value="1"/>
</dbReference>
<dbReference type="InterPro" id="IPR036219">
    <property type="entry name" value="eEF-1beta-like_sf"/>
</dbReference>
<dbReference type="InterPro" id="IPR014038">
    <property type="entry name" value="EF1B_bsu/dsu_GNE"/>
</dbReference>
<dbReference type="InterPro" id="IPR014717">
    <property type="entry name" value="Transl_elong_EF1B/ribsomal_bS6"/>
</dbReference>
<dbReference type="InterPro" id="IPR004542">
    <property type="entry name" value="Transl_elong_EF1B_B_arc"/>
</dbReference>
<dbReference type="NCBIfam" id="TIGR00489">
    <property type="entry name" value="aEF-1_beta"/>
    <property type="match status" value="1"/>
</dbReference>
<dbReference type="NCBIfam" id="NF001670">
    <property type="entry name" value="PRK00435.1"/>
    <property type="match status" value="1"/>
</dbReference>
<dbReference type="PANTHER" id="PTHR39647">
    <property type="entry name" value="ELONGATION FACTOR 1-BETA"/>
    <property type="match status" value="1"/>
</dbReference>
<dbReference type="PANTHER" id="PTHR39647:SF1">
    <property type="entry name" value="ELONGATION FACTOR 1-BETA"/>
    <property type="match status" value="1"/>
</dbReference>
<dbReference type="Pfam" id="PF00736">
    <property type="entry name" value="EF1_GNE"/>
    <property type="match status" value="1"/>
</dbReference>
<dbReference type="PIRSF" id="PIRSF006521">
    <property type="entry name" value="Transl_elong_EF1B_B_arc"/>
    <property type="match status" value="1"/>
</dbReference>
<dbReference type="SMART" id="SM00888">
    <property type="entry name" value="EF1_GNE"/>
    <property type="match status" value="1"/>
</dbReference>
<dbReference type="SUPFAM" id="SSF54984">
    <property type="entry name" value="eEF-1beta-like"/>
    <property type="match status" value="1"/>
</dbReference>
<name>EF1B_THEON</name>
<feature type="chain" id="PRO_0000366440" description="Elongation factor 1-beta">
    <location>
        <begin position="1"/>
        <end position="91"/>
    </location>
</feature>
<gene>
    <name evidence="1" type="primary">ef1b</name>
    <name type="ordered locus">TON_1866</name>
</gene>
<organism>
    <name type="scientific">Thermococcus onnurineus (strain NA1)</name>
    <dbReference type="NCBI Taxonomy" id="523850"/>
    <lineage>
        <taxon>Archaea</taxon>
        <taxon>Methanobacteriati</taxon>
        <taxon>Methanobacteriota</taxon>
        <taxon>Thermococci</taxon>
        <taxon>Thermococcales</taxon>
        <taxon>Thermococcaceae</taxon>
        <taxon>Thermococcus</taxon>
    </lineage>
</organism>
<protein>
    <recommendedName>
        <fullName evidence="1">Elongation factor 1-beta</fullName>
        <shortName evidence="1">EF-1-beta</shortName>
    </recommendedName>
    <alternativeName>
        <fullName evidence="1">aEF-1beta</fullName>
    </alternativeName>
</protein>
<comment type="function">
    <text evidence="1">Promotes the exchange of GDP for GTP in EF-1-alpha/GDP, thus allowing the regeneration of EF-1-alpha/GTP that could then be used to form the ternary complex EF-1-alpha/GTP/AAtRNA.</text>
</comment>
<comment type="similarity">
    <text evidence="1">Belongs to the EF-1-beta/EF-1-delta family.</text>
</comment>
<evidence type="ECO:0000255" key="1">
    <source>
        <dbReference type="HAMAP-Rule" id="MF_00043"/>
    </source>
</evidence>
<accession>B6YVN3</accession>
<reference key="1">
    <citation type="journal article" date="2008" name="J. Bacteriol.">
        <title>The complete genome sequence of Thermococcus onnurineus NA1 reveals a mixed heterotrophic and carboxydotrophic metabolism.</title>
        <authorList>
            <person name="Lee H.S."/>
            <person name="Kang S.G."/>
            <person name="Bae S.S."/>
            <person name="Lim J.K."/>
            <person name="Cho Y."/>
            <person name="Kim Y.J."/>
            <person name="Jeon J.H."/>
            <person name="Cha S.-S."/>
            <person name="Kwon K.K."/>
            <person name="Kim H.-T."/>
            <person name="Park C.-J."/>
            <person name="Lee H.-W."/>
            <person name="Kim S.I."/>
            <person name="Chun J."/>
            <person name="Colwell R.R."/>
            <person name="Kim S.-J."/>
            <person name="Lee J.-H."/>
        </authorList>
    </citation>
    <scope>NUCLEOTIDE SEQUENCE [LARGE SCALE GENOMIC DNA]</scope>
    <source>
        <strain>NA1</strain>
    </source>
</reference>
<proteinExistence type="inferred from homology"/>